<name>NRFA_ECOSM</name>
<gene>
    <name evidence="1" type="primary">nrfA</name>
    <name type="ordered locus">EcSMS35_4532</name>
</gene>
<accession>B1LPN5</accession>
<reference key="1">
    <citation type="journal article" date="2008" name="J. Bacteriol.">
        <title>Insights into the environmental resistance gene pool from the genome sequence of the multidrug-resistant environmental isolate Escherichia coli SMS-3-5.</title>
        <authorList>
            <person name="Fricke W.F."/>
            <person name="Wright M.S."/>
            <person name="Lindell A.H."/>
            <person name="Harkins D.M."/>
            <person name="Baker-Austin C."/>
            <person name="Ravel J."/>
            <person name="Stepanauskas R."/>
        </authorList>
    </citation>
    <scope>NUCLEOTIDE SEQUENCE [LARGE SCALE GENOMIC DNA]</scope>
    <source>
        <strain>SMS-3-5 / SECEC</strain>
    </source>
</reference>
<comment type="function">
    <text evidence="1">Catalyzes the reduction of nitrite to ammonia, consuming six electrons in the process.</text>
</comment>
<comment type="catalytic activity">
    <reaction evidence="1">
        <text>6 Fe(III)-[cytochrome c] + NH4(+) + 2 H2O = 6 Fe(II)-[cytochrome c] + nitrite + 8 H(+)</text>
        <dbReference type="Rhea" id="RHEA:13089"/>
        <dbReference type="Rhea" id="RHEA-COMP:10350"/>
        <dbReference type="Rhea" id="RHEA-COMP:14399"/>
        <dbReference type="ChEBI" id="CHEBI:15377"/>
        <dbReference type="ChEBI" id="CHEBI:15378"/>
        <dbReference type="ChEBI" id="CHEBI:16301"/>
        <dbReference type="ChEBI" id="CHEBI:28938"/>
        <dbReference type="ChEBI" id="CHEBI:29033"/>
        <dbReference type="ChEBI" id="CHEBI:29034"/>
        <dbReference type="EC" id="1.7.2.2"/>
    </reaction>
</comment>
<comment type="cofactor">
    <cofactor evidence="1">
        <name>Ca(2+)</name>
        <dbReference type="ChEBI" id="CHEBI:29108"/>
    </cofactor>
    <text evidence="1">Binds 1 Ca(2+) ion per monomer.</text>
</comment>
<comment type="cofactor">
    <cofactor evidence="1">
        <name>heme c</name>
        <dbReference type="ChEBI" id="CHEBI:61717"/>
    </cofactor>
    <text evidence="1">Binds 5 heme c groups covalently per monomer.</text>
</comment>
<comment type="pathway">
    <text evidence="1">Nitrogen metabolism; nitrate reduction (assimilation).</text>
</comment>
<comment type="subcellular location">
    <subcellularLocation>
        <location evidence="1">Periplasm</location>
    </subcellularLocation>
</comment>
<comment type="similarity">
    <text evidence="1">Belongs to the cytochrome c-552 family.</text>
</comment>
<proteinExistence type="inferred from homology"/>
<organism>
    <name type="scientific">Escherichia coli (strain SMS-3-5 / SECEC)</name>
    <dbReference type="NCBI Taxonomy" id="439855"/>
    <lineage>
        <taxon>Bacteria</taxon>
        <taxon>Pseudomonadati</taxon>
        <taxon>Pseudomonadota</taxon>
        <taxon>Gammaproteobacteria</taxon>
        <taxon>Enterobacterales</taxon>
        <taxon>Enterobacteriaceae</taxon>
        <taxon>Escherichia</taxon>
    </lineage>
</organism>
<feature type="signal peptide" evidence="1">
    <location>
        <begin position="1"/>
        <end position="26"/>
    </location>
</feature>
<feature type="chain" id="PRO_1000138216" description="Cytochrome c-552">
    <location>
        <begin position="27"/>
        <end position="478"/>
    </location>
</feature>
<feature type="binding site" description="axial binding residue" evidence="1">
    <location>
        <position position="94"/>
    </location>
    <ligand>
        <name>heme c</name>
        <dbReference type="ChEBI" id="CHEBI:61717"/>
        <label>3</label>
    </ligand>
    <ligandPart>
        <name>Fe</name>
        <dbReference type="ChEBI" id="CHEBI:18248"/>
    </ligandPart>
</feature>
<feature type="binding site" description="covalent" evidence="1">
    <location>
        <position position="122"/>
    </location>
    <ligand>
        <name>heme</name>
        <dbReference type="ChEBI" id="CHEBI:30413"/>
        <label>1</label>
    </ligand>
</feature>
<feature type="binding site" description="covalent" evidence="1">
    <location>
        <position position="125"/>
    </location>
    <ligand>
        <name>heme</name>
        <dbReference type="ChEBI" id="CHEBI:30413"/>
        <label>1</label>
    </ligand>
</feature>
<feature type="binding site" description="axial binding residue" evidence="1">
    <location>
        <position position="126"/>
    </location>
    <ligand>
        <name>heme</name>
        <dbReference type="ChEBI" id="CHEBI:30413"/>
        <label>1</label>
    </ligand>
    <ligandPart>
        <name>Fe</name>
        <dbReference type="ChEBI" id="CHEBI:18248"/>
    </ligandPart>
</feature>
<feature type="binding site" description="covalent" evidence="1">
    <location>
        <position position="160"/>
    </location>
    <ligand>
        <name>heme c</name>
        <dbReference type="ChEBI" id="CHEBI:61717"/>
        <label>2</label>
    </ligand>
</feature>
<feature type="binding site" description="covalent" evidence="1">
    <location>
        <position position="163"/>
    </location>
    <ligand>
        <name>heme c</name>
        <dbReference type="ChEBI" id="CHEBI:61717"/>
        <label>2</label>
    </ligand>
</feature>
<feature type="binding site" description="axial binding residue" evidence="1">
    <location>
        <position position="164"/>
    </location>
    <ligand>
        <name>heme c</name>
        <dbReference type="ChEBI" id="CHEBI:61717"/>
        <label>2</label>
    </ligand>
    <ligandPart>
        <name>Fe</name>
        <dbReference type="ChEBI" id="CHEBI:18248"/>
    </ligandPart>
</feature>
<feature type="binding site" description="covalent" evidence="1">
    <location>
        <position position="209"/>
    </location>
    <ligand>
        <name>heme c</name>
        <dbReference type="ChEBI" id="CHEBI:61717"/>
        <label>3</label>
    </ligand>
</feature>
<feature type="binding site" description="covalent" evidence="1">
    <location>
        <position position="212"/>
    </location>
    <ligand>
        <name>heme c</name>
        <dbReference type="ChEBI" id="CHEBI:61717"/>
        <label>3</label>
    </ligand>
</feature>
<feature type="binding site" description="axial binding residue" evidence="1">
    <location>
        <position position="213"/>
    </location>
    <ligand>
        <name>heme c</name>
        <dbReference type="ChEBI" id="CHEBI:61717"/>
        <label>3</label>
    </ligand>
    <ligandPart>
        <name>Fe</name>
        <dbReference type="ChEBI" id="CHEBI:18248"/>
    </ligandPart>
</feature>
<feature type="binding site" evidence="1">
    <location>
        <position position="215"/>
    </location>
    <ligand>
        <name>Ca(2+)</name>
        <dbReference type="ChEBI" id="CHEBI:29108"/>
    </ligand>
</feature>
<feature type="binding site" evidence="1">
    <location>
        <position position="216"/>
    </location>
    <ligand>
        <name>Ca(2+)</name>
        <dbReference type="ChEBI" id="CHEBI:29108"/>
    </ligand>
</feature>
<feature type="binding site" evidence="1">
    <location>
        <position position="216"/>
    </location>
    <ligand>
        <name>substrate</name>
    </ligand>
</feature>
<feature type="binding site" evidence="1">
    <location>
        <position position="261"/>
    </location>
    <ligand>
        <name>Ca(2+)</name>
        <dbReference type="ChEBI" id="CHEBI:29108"/>
    </ligand>
</feature>
<feature type="binding site" evidence="1">
    <location>
        <position position="263"/>
    </location>
    <ligand>
        <name>Ca(2+)</name>
        <dbReference type="ChEBI" id="CHEBI:29108"/>
    </ligand>
</feature>
<feature type="binding site" evidence="1">
    <location>
        <position position="264"/>
    </location>
    <ligand>
        <name>substrate</name>
    </ligand>
</feature>
<feature type="binding site" description="axial binding residue" evidence="1">
    <location>
        <position position="275"/>
    </location>
    <ligand>
        <name>heme c</name>
        <dbReference type="ChEBI" id="CHEBI:61717"/>
        <label>5</label>
    </ligand>
    <ligandPart>
        <name>Fe</name>
        <dbReference type="ChEBI" id="CHEBI:18248"/>
    </ligandPart>
</feature>
<feature type="binding site" description="covalent" evidence="1">
    <location>
        <position position="282"/>
    </location>
    <ligand>
        <name>heme c</name>
        <dbReference type="ChEBI" id="CHEBI:61717"/>
        <label>4</label>
    </ligand>
</feature>
<feature type="binding site" description="covalent" evidence="1">
    <location>
        <position position="285"/>
    </location>
    <ligand>
        <name>heme c</name>
        <dbReference type="ChEBI" id="CHEBI:61717"/>
        <label>4</label>
    </ligand>
</feature>
<feature type="binding site" description="axial binding residue" evidence="1">
    <location>
        <position position="286"/>
    </location>
    <ligand>
        <name>heme c</name>
        <dbReference type="ChEBI" id="CHEBI:61717"/>
        <label>4</label>
    </ligand>
    <ligandPart>
        <name>Fe</name>
        <dbReference type="ChEBI" id="CHEBI:18248"/>
    </ligandPart>
</feature>
<feature type="binding site" description="axial binding residue" evidence="1">
    <location>
        <position position="301"/>
    </location>
    <ligand>
        <name>heme c</name>
        <dbReference type="ChEBI" id="CHEBI:61717"/>
        <label>2</label>
    </ligand>
    <ligandPart>
        <name>Fe</name>
        <dbReference type="ChEBI" id="CHEBI:18248"/>
    </ligandPart>
</feature>
<feature type="binding site" description="covalent" evidence="1">
    <location>
        <position position="314"/>
    </location>
    <ligand>
        <name>heme c</name>
        <dbReference type="ChEBI" id="CHEBI:61717"/>
        <label>5</label>
    </ligand>
</feature>
<feature type="binding site" description="covalent" evidence="1">
    <location>
        <position position="317"/>
    </location>
    <ligand>
        <name>heme c</name>
        <dbReference type="ChEBI" id="CHEBI:61717"/>
        <label>5</label>
    </ligand>
</feature>
<feature type="binding site" description="axial binding residue" evidence="1">
    <location>
        <position position="318"/>
    </location>
    <ligand>
        <name>heme c</name>
        <dbReference type="ChEBI" id="CHEBI:61717"/>
        <label>5</label>
    </ligand>
    <ligandPart>
        <name>Fe</name>
        <dbReference type="ChEBI" id="CHEBI:18248"/>
    </ligandPart>
</feature>
<feature type="binding site" description="axial binding residue" evidence="1">
    <location>
        <position position="393"/>
    </location>
    <ligand>
        <name>heme c</name>
        <dbReference type="ChEBI" id="CHEBI:61717"/>
        <label>4</label>
    </ligand>
    <ligandPart>
        <name>Fe</name>
        <dbReference type="ChEBI" id="CHEBI:18248"/>
    </ligandPart>
</feature>
<sequence length="478" mass="53703">MTRIKINARRIFSLLIPFFFFTSVHAEQTAAPAKPVTVEAKNETFAPQHPDQYLSWKATSEQSERVDALAEDPRLVILWAGYPFSRDYNKPRGHAFAVTDVRETLRTGAPKNAEDGPLPMACWSCKSPDVARLIQKDGEDGYFHGKWARGGPEIVNNLGCADCHNTASPEFAKGKPELTLSRPYAARAMEAIGKPFEKAGRFDQQSMVCGQCHVEYYFDGKNKAVKFPWDDGMKVENMEQYYDKIAFSDWTNSLSKTPMLKAQHPEYETWTAGIHGKNNVTCIDCHMPKVQNAEGKLYTDHKIGNPFDNFAQTCANCHTQDKAALQKVVAERKQSINDLKIKVEDQLVHAHFEAKAALDAGATEAEMKPIQDDIRHAQWRWDLAIASHGIHMHAPEEGLRMLGTAMDKAADARTKLARLLATKGITHEIQIPDISTKEKAQQAIGLNMEQIKAEKQDFIKTVIPQWEEQARKNGLLSQ</sequence>
<dbReference type="EC" id="1.7.2.2" evidence="1"/>
<dbReference type="EMBL" id="CP000970">
    <property type="protein sequence ID" value="ACB15701.1"/>
    <property type="molecule type" value="Genomic_DNA"/>
</dbReference>
<dbReference type="RefSeq" id="WP_000196875.1">
    <property type="nucleotide sequence ID" value="NC_010498.1"/>
</dbReference>
<dbReference type="SMR" id="B1LPN5"/>
<dbReference type="GeneID" id="93777759"/>
<dbReference type="KEGG" id="ecm:EcSMS35_4532"/>
<dbReference type="HOGENOM" id="CLU_035040_1_0_6"/>
<dbReference type="UniPathway" id="UPA00653"/>
<dbReference type="Proteomes" id="UP000007011">
    <property type="component" value="Chromosome"/>
</dbReference>
<dbReference type="GO" id="GO:0030288">
    <property type="term" value="C:outer membrane-bounded periplasmic space"/>
    <property type="evidence" value="ECO:0007669"/>
    <property type="project" value="TreeGrafter"/>
</dbReference>
<dbReference type="GO" id="GO:0005509">
    <property type="term" value="F:calcium ion binding"/>
    <property type="evidence" value="ECO:0007669"/>
    <property type="project" value="UniProtKB-UniRule"/>
</dbReference>
<dbReference type="GO" id="GO:0020037">
    <property type="term" value="F:heme binding"/>
    <property type="evidence" value="ECO:0007669"/>
    <property type="project" value="InterPro"/>
</dbReference>
<dbReference type="GO" id="GO:0005506">
    <property type="term" value="F:iron ion binding"/>
    <property type="evidence" value="ECO:0007669"/>
    <property type="project" value="UniProtKB-UniRule"/>
</dbReference>
<dbReference type="GO" id="GO:0042279">
    <property type="term" value="F:nitrite reductase (cytochrome, ammonia-forming) activity"/>
    <property type="evidence" value="ECO:0007669"/>
    <property type="project" value="UniProtKB-UniRule"/>
</dbReference>
<dbReference type="GO" id="GO:0019645">
    <property type="term" value="P:anaerobic electron transport chain"/>
    <property type="evidence" value="ECO:0007669"/>
    <property type="project" value="TreeGrafter"/>
</dbReference>
<dbReference type="GO" id="GO:0042128">
    <property type="term" value="P:nitrate assimilation"/>
    <property type="evidence" value="ECO:0007669"/>
    <property type="project" value="UniProtKB-UniRule"/>
</dbReference>
<dbReference type="CDD" id="cd00548">
    <property type="entry name" value="NrfA-like"/>
    <property type="match status" value="1"/>
</dbReference>
<dbReference type="FunFam" id="1.10.1130.10:FF:000002">
    <property type="entry name" value="Cytochrome c-552"/>
    <property type="match status" value="1"/>
</dbReference>
<dbReference type="FunFam" id="1.20.140.10:FF:000014">
    <property type="entry name" value="Cytochrome c-552"/>
    <property type="match status" value="1"/>
</dbReference>
<dbReference type="Gene3D" id="1.20.140.10">
    <property type="entry name" value="Butyryl-CoA Dehydrogenase, subunit A, domain 3"/>
    <property type="match status" value="1"/>
</dbReference>
<dbReference type="Gene3D" id="1.10.1130.10">
    <property type="entry name" value="Flavocytochrome C3, Chain A"/>
    <property type="match status" value="1"/>
</dbReference>
<dbReference type="HAMAP" id="MF_01182">
    <property type="entry name" value="Cytochrom_C552"/>
    <property type="match status" value="1"/>
</dbReference>
<dbReference type="InterPro" id="IPR003321">
    <property type="entry name" value="Cyt_c552"/>
</dbReference>
<dbReference type="InterPro" id="IPR017570">
    <property type="entry name" value="Cyt_c_NO2Rdtase_formate-dep"/>
</dbReference>
<dbReference type="InterPro" id="IPR036280">
    <property type="entry name" value="Multihaem_cyt_sf"/>
</dbReference>
<dbReference type="NCBIfam" id="TIGR03152">
    <property type="entry name" value="cyto_c552_HCOOH"/>
    <property type="match status" value="1"/>
</dbReference>
<dbReference type="NCBIfam" id="NF008339">
    <property type="entry name" value="PRK11125.1"/>
    <property type="match status" value="1"/>
</dbReference>
<dbReference type="PANTHER" id="PTHR30633:SF0">
    <property type="entry name" value="CYTOCHROME C-552"/>
    <property type="match status" value="1"/>
</dbReference>
<dbReference type="PANTHER" id="PTHR30633">
    <property type="entry name" value="CYTOCHROME C-552 RESPIRATORY NITRITE REDUCTASE"/>
    <property type="match status" value="1"/>
</dbReference>
<dbReference type="Pfam" id="PF02335">
    <property type="entry name" value="Cytochrom_C552"/>
    <property type="match status" value="1"/>
</dbReference>
<dbReference type="PIRSF" id="PIRSF000243">
    <property type="entry name" value="Cyt_c552"/>
    <property type="match status" value="1"/>
</dbReference>
<dbReference type="SUPFAM" id="SSF48695">
    <property type="entry name" value="Multiheme cytochromes"/>
    <property type="match status" value="1"/>
</dbReference>
<dbReference type="PROSITE" id="PS51008">
    <property type="entry name" value="MULTIHEME_CYTC"/>
    <property type="match status" value="1"/>
</dbReference>
<keyword id="KW-0106">Calcium</keyword>
<keyword id="KW-0249">Electron transport</keyword>
<keyword id="KW-0349">Heme</keyword>
<keyword id="KW-0408">Iron</keyword>
<keyword id="KW-0479">Metal-binding</keyword>
<keyword id="KW-0560">Oxidoreductase</keyword>
<keyword id="KW-0574">Periplasm</keyword>
<keyword id="KW-0732">Signal</keyword>
<keyword id="KW-0813">Transport</keyword>
<protein>
    <recommendedName>
        <fullName evidence="1">Cytochrome c-552</fullName>
        <ecNumber evidence="1">1.7.2.2</ecNumber>
    </recommendedName>
    <alternativeName>
        <fullName evidence="1">Ammonia-forming cytochrome c nitrite reductase</fullName>
        <shortName evidence="1">Cytochrome c nitrite reductase</shortName>
    </alternativeName>
</protein>
<evidence type="ECO:0000255" key="1">
    <source>
        <dbReference type="HAMAP-Rule" id="MF_01182"/>
    </source>
</evidence>